<feature type="chain" id="PRO_0000195755" description="Uncharacterized protein Mb1354c">
    <location>
        <begin position="1"/>
        <end position="567"/>
    </location>
</feature>
<feature type="transmembrane region" description="Helical" evidence="1">
    <location>
        <begin position="57"/>
        <end position="77"/>
    </location>
</feature>
<feature type="transmembrane region" description="Helical" evidence="1">
    <location>
        <begin position="90"/>
        <end position="110"/>
    </location>
</feature>
<feature type="transmembrane region" description="Helical" evidence="1">
    <location>
        <begin position="142"/>
        <end position="162"/>
    </location>
</feature>
<feature type="transmembrane region" description="Helical" evidence="1">
    <location>
        <begin position="173"/>
        <end position="193"/>
    </location>
</feature>
<feature type="transmembrane region" description="Helical" evidence="1">
    <location>
        <begin position="221"/>
        <end position="241"/>
    </location>
</feature>
<feature type="transmembrane region" description="Helical" evidence="1">
    <location>
        <begin position="257"/>
        <end position="277"/>
    </location>
</feature>
<feature type="domain" description="HAMP" evidence="3">
    <location>
        <begin position="277"/>
        <end position="329"/>
    </location>
</feature>
<feature type="domain" description="Guanylate cyclase" evidence="2">
    <location>
        <begin position="361"/>
        <end position="485"/>
    </location>
</feature>
<feature type="region of interest" description="Disordered" evidence="4">
    <location>
        <begin position="1"/>
        <end position="26"/>
    </location>
</feature>
<reference key="1">
    <citation type="journal article" date="2003" name="Proc. Natl. Acad. Sci. U.S.A.">
        <title>The complete genome sequence of Mycobacterium bovis.</title>
        <authorList>
            <person name="Garnier T."/>
            <person name="Eiglmeier K."/>
            <person name="Camus J.-C."/>
            <person name="Medina N."/>
            <person name="Mansoor H."/>
            <person name="Pryor M."/>
            <person name="Duthoy S."/>
            <person name="Grondin S."/>
            <person name="Lacroix C."/>
            <person name="Monsempe C."/>
            <person name="Simon S."/>
            <person name="Harris B."/>
            <person name="Atkin R."/>
            <person name="Doggett J."/>
            <person name="Mayes R."/>
            <person name="Keating L."/>
            <person name="Wheeler P.R."/>
            <person name="Parkhill J."/>
            <person name="Barrell B.G."/>
            <person name="Cole S.T."/>
            <person name="Gordon S.V."/>
            <person name="Hewinson R.G."/>
        </authorList>
    </citation>
    <scope>NUCLEOTIDE SEQUENCE [LARGE SCALE GENOMIC DNA]</scope>
    <source>
        <strain>ATCC BAA-935 / AF2122/97</strain>
    </source>
</reference>
<reference key="2">
    <citation type="journal article" date="2017" name="Genome Announc.">
        <title>Updated reference genome sequence and annotation of Mycobacterium bovis AF2122/97.</title>
        <authorList>
            <person name="Malone K.M."/>
            <person name="Farrell D."/>
            <person name="Stuber T.P."/>
            <person name="Schubert O.T."/>
            <person name="Aebersold R."/>
            <person name="Robbe-Austerman S."/>
            <person name="Gordon S.V."/>
        </authorList>
    </citation>
    <scope>NUCLEOTIDE SEQUENCE [LARGE SCALE GENOMIC DNA]</scope>
    <scope>GENOME REANNOTATION</scope>
    <source>
        <strain>ATCC BAA-935 / AF2122/97</strain>
    </source>
</reference>
<gene>
    <name type="ordered locus">BQ2027_MB1354C</name>
</gene>
<name>Y1354_MYCBO</name>
<organism>
    <name type="scientific">Mycobacterium bovis (strain ATCC BAA-935 / AF2122/97)</name>
    <dbReference type="NCBI Taxonomy" id="233413"/>
    <lineage>
        <taxon>Bacteria</taxon>
        <taxon>Bacillati</taxon>
        <taxon>Actinomycetota</taxon>
        <taxon>Actinomycetes</taxon>
        <taxon>Mycobacteriales</taxon>
        <taxon>Mycobacteriaceae</taxon>
        <taxon>Mycobacterium</taxon>
        <taxon>Mycobacterium tuberculosis complex</taxon>
    </lineage>
</organism>
<protein>
    <recommendedName>
        <fullName>Uncharacterized protein Mb1354c</fullName>
    </recommendedName>
</protein>
<sequence length="567" mass="61935">MPSEKATTRHLPGAVETLSPRTGRRPETPAYGSWLLGRVSESPRMRRVRIQGMLTVAILVTNVIGLIVGAMLLTVAFPKPSVILDAPHWVSFGIVPGYCVLAFILGTYWLTRQTARALRWAIEERTPSHDEARSAFLVPLRVALAVLFLWGAAAALWTIIYGLANRLFIPRFLFSMGVIGVVAATSCYLLTEFALRPMAAQALEVGATPRSLVRGIVGRTMLVWLLCSGVPNVGVALTAIFDDTFWELSNDQFMITVLILWAPLLIFGFILMWILAWLTATPVRVVREALNRVEQGDLSGDLVVFDGTELGELQRGFNRMVEGLRERERVRDLFGRHVGREVAAAAERERPKLGGEERHVAVVFVDIVGSTQLVTSRPAAEVVMLLNRFFTVIVDEVNHHRGLVNKFQGDASLAVFGAPNRLSHPEDAALATARAIADRLASEMPECQAGIGVAAGQVVAGNVGAHERFEYTVIGEPVNEAARLCELAKSYPSRLLASSQTLRGASENECARWSLGETVTLRGHDQPIRLASPVQQLQMPAQSADIVGGALGDHQTHTIYRGAHPTD</sequence>
<proteinExistence type="inferred from homology"/>
<evidence type="ECO:0000255" key="1"/>
<evidence type="ECO:0000255" key="2">
    <source>
        <dbReference type="PROSITE-ProRule" id="PRU00099"/>
    </source>
</evidence>
<evidence type="ECO:0000255" key="3">
    <source>
        <dbReference type="PROSITE-ProRule" id="PRU00102"/>
    </source>
</evidence>
<evidence type="ECO:0000256" key="4">
    <source>
        <dbReference type="SAM" id="MobiDB-lite"/>
    </source>
</evidence>
<evidence type="ECO:0000305" key="5"/>
<comment type="subcellular location">
    <subcellularLocation>
        <location evidence="5">Cell membrane</location>
        <topology evidence="5">Multi-pass membrane protein</topology>
    </subcellularLocation>
</comment>
<comment type="similarity">
    <text evidence="5">Belongs to the adenylyl cyclase class-3 family.</text>
</comment>
<accession>P59972</accession>
<accession>A0A1R3XY05</accession>
<accession>X2BHL2</accession>
<keyword id="KW-1003">Cell membrane</keyword>
<keyword id="KW-0472">Membrane</keyword>
<keyword id="KW-1185">Reference proteome</keyword>
<keyword id="KW-0812">Transmembrane</keyword>
<keyword id="KW-1133">Transmembrane helix</keyword>
<dbReference type="EMBL" id="LT708304">
    <property type="protein sequence ID" value="SIT99957.1"/>
    <property type="molecule type" value="Genomic_DNA"/>
</dbReference>
<dbReference type="RefSeq" id="NP_855008.1">
    <property type="nucleotide sequence ID" value="NC_002945.3"/>
</dbReference>
<dbReference type="RefSeq" id="WP_003898821.1">
    <property type="nucleotide sequence ID" value="NC_002945.4"/>
</dbReference>
<dbReference type="SMR" id="P59972"/>
<dbReference type="KEGG" id="mbo:BQ2027_MB1354C"/>
<dbReference type="PATRIC" id="fig|233413.5.peg.1484"/>
<dbReference type="Proteomes" id="UP000001419">
    <property type="component" value="Chromosome"/>
</dbReference>
<dbReference type="GO" id="GO:0005886">
    <property type="term" value="C:plasma membrane"/>
    <property type="evidence" value="ECO:0007669"/>
    <property type="project" value="UniProtKB-SubCell"/>
</dbReference>
<dbReference type="GO" id="GO:0004016">
    <property type="term" value="F:adenylate cyclase activity"/>
    <property type="evidence" value="ECO:0007669"/>
    <property type="project" value="UniProtKB-ARBA"/>
</dbReference>
<dbReference type="GO" id="GO:0006171">
    <property type="term" value="P:cAMP biosynthetic process"/>
    <property type="evidence" value="ECO:0007669"/>
    <property type="project" value="TreeGrafter"/>
</dbReference>
<dbReference type="GO" id="GO:0035556">
    <property type="term" value="P:intracellular signal transduction"/>
    <property type="evidence" value="ECO:0007669"/>
    <property type="project" value="InterPro"/>
</dbReference>
<dbReference type="CDD" id="cd07302">
    <property type="entry name" value="CHD"/>
    <property type="match status" value="1"/>
</dbReference>
<dbReference type="CDD" id="cd06225">
    <property type="entry name" value="HAMP"/>
    <property type="match status" value="1"/>
</dbReference>
<dbReference type="FunFam" id="3.30.70.1230:FF:000016">
    <property type="entry name" value="Adenylate/guanylate cyclase domain-containing protein"/>
    <property type="match status" value="1"/>
</dbReference>
<dbReference type="Gene3D" id="6.10.340.10">
    <property type="match status" value="1"/>
</dbReference>
<dbReference type="Gene3D" id="3.30.70.1230">
    <property type="entry name" value="Nucleotide cyclase"/>
    <property type="match status" value="1"/>
</dbReference>
<dbReference type="InterPro" id="IPR001054">
    <property type="entry name" value="A/G_cyclase"/>
</dbReference>
<dbReference type="InterPro" id="IPR050697">
    <property type="entry name" value="Adenylyl/Guanylyl_Cyclase_3/4"/>
</dbReference>
<dbReference type="InterPro" id="IPR003660">
    <property type="entry name" value="HAMP_dom"/>
</dbReference>
<dbReference type="InterPro" id="IPR029787">
    <property type="entry name" value="Nucleotide_cyclase"/>
</dbReference>
<dbReference type="PANTHER" id="PTHR43081">
    <property type="entry name" value="ADENYLATE CYCLASE, TERMINAL-DIFFERENTIATION SPECIFIC-RELATED"/>
    <property type="match status" value="1"/>
</dbReference>
<dbReference type="PANTHER" id="PTHR43081:SF17">
    <property type="entry name" value="BLL5647 PROTEIN"/>
    <property type="match status" value="1"/>
</dbReference>
<dbReference type="Pfam" id="PF00211">
    <property type="entry name" value="Guanylate_cyc"/>
    <property type="match status" value="1"/>
</dbReference>
<dbReference type="Pfam" id="PF00672">
    <property type="entry name" value="HAMP"/>
    <property type="match status" value="1"/>
</dbReference>
<dbReference type="SMART" id="SM00044">
    <property type="entry name" value="CYCc"/>
    <property type="match status" value="1"/>
</dbReference>
<dbReference type="SMART" id="SM00304">
    <property type="entry name" value="HAMP"/>
    <property type="match status" value="1"/>
</dbReference>
<dbReference type="SUPFAM" id="SSF158472">
    <property type="entry name" value="HAMP domain-like"/>
    <property type="match status" value="1"/>
</dbReference>
<dbReference type="SUPFAM" id="SSF55073">
    <property type="entry name" value="Nucleotide cyclase"/>
    <property type="match status" value="1"/>
</dbReference>
<dbReference type="PROSITE" id="PS50125">
    <property type="entry name" value="GUANYLATE_CYCLASE_2"/>
    <property type="match status" value="1"/>
</dbReference>
<dbReference type="PROSITE" id="PS50885">
    <property type="entry name" value="HAMP"/>
    <property type="match status" value="1"/>
</dbReference>